<keyword id="KW-0030">Aminoacyl-tRNA synthetase</keyword>
<keyword id="KW-0067">ATP-binding</keyword>
<keyword id="KW-0963">Cytoplasm</keyword>
<keyword id="KW-0436">Ligase</keyword>
<keyword id="KW-0460">Magnesium</keyword>
<keyword id="KW-0479">Metal-binding</keyword>
<keyword id="KW-0547">Nucleotide-binding</keyword>
<keyword id="KW-0648">Protein biosynthesis</keyword>
<gene>
    <name evidence="1" type="primary">pheS</name>
    <name type="ordered locus">Smal_2801</name>
</gene>
<evidence type="ECO:0000255" key="1">
    <source>
        <dbReference type="HAMAP-Rule" id="MF_00281"/>
    </source>
</evidence>
<sequence length="331" mass="36858">MSDIQSLTTQALADVAAAQSPDVLEQLRVALLGKSGSITSQLKQLGALPADERKAAGEAINQARDALSHALGERKAVLEDAALDARLAAESIDITLPGRSAERAGLHPITRTLERITGIFGRLGYELSEGPEIEDDWHNFEALNFPPHHPARAMHDTFYFGDGRLLRTHTSGVQVRYMGDHAPPLRMIAAGKVYRSDSDQTHSPMFHQVEGLLVDEHSTFADLKGTLAEFVRAFFERDFEMRFRPSYFPFVEPGAEVDIAWQQPDGSTRWLEVLGCGMVHPNVLRNVGIDPERYTGFAFGMGVERFAMLRYGVNDLRAFFENDVRFLKQFA</sequence>
<dbReference type="EC" id="6.1.1.20" evidence="1"/>
<dbReference type="EMBL" id="CP001111">
    <property type="protein sequence ID" value="ACF52501.1"/>
    <property type="molecule type" value="Genomic_DNA"/>
</dbReference>
<dbReference type="RefSeq" id="WP_012511694.1">
    <property type="nucleotide sequence ID" value="NC_011071.1"/>
</dbReference>
<dbReference type="SMR" id="B4SQH0"/>
<dbReference type="STRING" id="391008.Smal_2801"/>
<dbReference type="KEGG" id="smt:Smal_2801"/>
<dbReference type="eggNOG" id="COG0016">
    <property type="taxonomic scope" value="Bacteria"/>
</dbReference>
<dbReference type="HOGENOM" id="CLU_025086_0_1_6"/>
<dbReference type="OrthoDB" id="9800719at2"/>
<dbReference type="Proteomes" id="UP000001867">
    <property type="component" value="Chromosome"/>
</dbReference>
<dbReference type="GO" id="GO:0005737">
    <property type="term" value="C:cytoplasm"/>
    <property type="evidence" value="ECO:0007669"/>
    <property type="project" value="UniProtKB-SubCell"/>
</dbReference>
<dbReference type="GO" id="GO:0005524">
    <property type="term" value="F:ATP binding"/>
    <property type="evidence" value="ECO:0007669"/>
    <property type="project" value="UniProtKB-UniRule"/>
</dbReference>
<dbReference type="GO" id="GO:0000287">
    <property type="term" value="F:magnesium ion binding"/>
    <property type="evidence" value="ECO:0007669"/>
    <property type="project" value="UniProtKB-UniRule"/>
</dbReference>
<dbReference type="GO" id="GO:0004826">
    <property type="term" value="F:phenylalanine-tRNA ligase activity"/>
    <property type="evidence" value="ECO:0007669"/>
    <property type="project" value="UniProtKB-UniRule"/>
</dbReference>
<dbReference type="GO" id="GO:0000049">
    <property type="term" value="F:tRNA binding"/>
    <property type="evidence" value="ECO:0007669"/>
    <property type="project" value="InterPro"/>
</dbReference>
<dbReference type="GO" id="GO:0006432">
    <property type="term" value="P:phenylalanyl-tRNA aminoacylation"/>
    <property type="evidence" value="ECO:0007669"/>
    <property type="project" value="UniProtKB-UniRule"/>
</dbReference>
<dbReference type="CDD" id="cd00496">
    <property type="entry name" value="PheRS_alpha_core"/>
    <property type="match status" value="1"/>
</dbReference>
<dbReference type="FunFam" id="3.30.930.10:FF:000003">
    <property type="entry name" value="Phenylalanine--tRNA ligase alpha subunit"/>
    <property type="match status" value="1"/>
</dbReference>
<dbReference type="Gene3D" id="3.30.930.10">
    <property type="entry name" value="Bira Bifunctional Protein, Domain 2"/>
    <property type="match status" value="1"/>
</dbReference>
<dbReference type="HAMAP" id="MF_00281">
    <property type="entry name" value="Phe_tRNA_synth_alpha1"/>
    <property type="match status" value="1"/>
</dbReference>
<dbReference type="InterPro" id="IPR006195">
    <property type="entry name" value="aa-tRNA-synth_II"/>
</dbReference>
<dbReference type="InterPro" id="IPR045864">
    <property type="entry name" value="aa-tRNA-synth_II/BPL/LPL"/>
</dbReference>
<dbReference type="InterPro" id="IPR004188">
    <property type="entry name" value="Phe-tRNA_ligase_II_N"/>
</dbReference>
<dbReference type="InterPro" id="IPR022911">
    <property type="entry name" value="Phe_tRNA_ligase_alpha1_bac"/>
</dbReference>
<dbReference type="InterPro" id="IPR002319">
    <property type="entry name" value="Phenylalanyl-tRNA_Synthase"/>
</dbReference>
<dbReference type="InterPro" id="IPR010978">
    <property type="entry name" value="tRNA-bd_arm"/>
</dbReference>
<dbReference type="PANTHER" id="PTHR11538:SF41">
    <property type="entry name" value="PHENYLALANINE--TRNA LIGASE, MITOCHONDRIAL"/>
    <property type="match status" value="1"/>
</dbReference>
<dbReference type="PANTHER" id="PTHR11538">
    <property type="entry name" value="PHENYLALANYL-TRNA SYNTHETASE"/>
    <property type="match status" value="1"/>
</dbReference>
<dbReference type="Pfam" id="PF02912">
    <property type="entry name" value="Phe_tRNA-synt_N"/>
    <property type="match status" value="1"/>
</dbReference>
<dbReference type="Pfam" id="PF01409">
    <property type="entry name" value="tRNA-synt_2d"/>
    <property type="match status" value="1"/>
</dbReference>
<dbReference type="SUPFAM" id="SSF55681">
    <property type="entry name" value="Class II aaRS and biotin synthetases"/>
    <property type="match status" value="1"/>
</dbReference>
<dbReference type="SUPFAM" id="SSF46589">
    <property type="entry name" value="tRNA-binding arm"/>
    <property type="match status" value="1"/>
</dbReference>
<dbReference type="PROSITE" id="PS50862">
    <property type="entry name" value="AA_TRNA_LIGASE_II"/>
    <property type="match status" value="1"/>
</dbReference>
<protein>
    <recommendedName>
        <fullName evidence="1">Phenylalanine--tRNA ligase alpha subunit</fullName>
        <ecNumber evidence="1">6.1.1.20</ecNumber>
    </recommendedName>
    <alternativeName>
        <fullName evidence="1">Phenylalanyl-tRNA synthetase alpha subunit</fullName>
        <shortName evidence="1">PheRS</shortName>
    </alternativeName>
</protein>
<organism>
    <name type="scientific">Stenotrophomonas maltophilia (strain R551-3)</name>
    <dbReference type="NCBI Taxonomy" id="391008"/>
    <lineage>
        <taxon>Bacteria</taxon>
        <taxon>Pseudomonadati</taxon>
        <taxon>Pseudomonadota</taxon>
        <taxon>Gammaproteobacteria</taxon>
        <taxon>Lysobacterales</taxon>
        <taxon>Lysobacteraceae</taxon>
        <taxon>Stenotrophomonas</taxon>
        <taxon>Stenotrophomonas maltophilia group</taxon>
    </lineage>
</organism>
<comment type="catalytic activity">
    <reaction evidence="1">
        <text>tRNA(Phe) + L-phenylalanine + ATP = L-phenylalanyl-tRNA(Phe) + AMP + diphosphate + H(+)</text>
        <dbReference type="Rhea" id="RHEA:19413"/>
        <dbReference type="Rhea" id="RHEA-COMP:9668"/>
        <dbReference type="Rhea" id="RHEA-COMP:9699"/>
        <dbReference type="ChEBI" id="CHEBI:15378"/>
        <dbReference type="ChEBI" id="CHEBI:30616"/>
        <dbReference type="ChEBI" id="CHEBI:33019"/>
        <dbReference type="ChEBI" id="CHEBI:58095"/>
        <dbReference type="ChEBI" id="CHEBI:78442"/>
        <dbReference type="ChEBI" id="CHEBI:78531"/>
        <dbReference type="ChEBI" id="CHEBI:456215"/>
        <dbReference type="EC" id="6.1.1.20"/>
    </reaction>
</comment>
<comment type="cofactor">
    <cofactor evidence="1">
        <name>Mg(2+)</name>
        <dbReference type="ChEBI" id="CHEBI:18420"/>
    </cofactor>
    <text evidence="1">Binds 2 magnesium ions per tetramer.</text>
</comment>
<comment type="subunit">
    <text evidence="1">Tetramer of two alpha and two beta subunits.</text>
</comment>
<comment type="subcellular location">
    <subcellularLocation>
        <location evidence="1">Cytoplasm</location>
    </subcellularLocation>
</comment>
<comment type="similarity">
    <text evidence="1">Belongs to the class-II aminoacyl-tRNA synthetase family. Phe-tRNA synthetase alpha subunit type 1 subfamily.</text>
</comment>
<feature type="chain" id="PRO_1000114919" description="Phenylalanine--tRNA ligase alpha subunit">
    <location>
        <begin position="1"/>
        <end position="331"/>
    </location>
</feature>
<feature type="binding site" evidence="1">
    <location>
        <position position="252"/>
    </location>
    <ligand>
        <name>Mg(2+)</name>
        <dbReference type="ChEBI" id="CHEBI:18420"/>
        <note>shared with beta subunit</note>
    </ligand>
</feature>
<accession>B4SQH0</accession>
<reference key="1">
    <citation type="submission" date="2008-06" db="EMBL/GenBank/DDBJ databases">
        <title>Complete sequence of Stenotrophomonas maltophilia R551-3.</title>
        <authorList>
            <consortium name="US DOE Joint Genome Institute"/>
            <person name="Lucas S."/>
            <person name="Copeland A."/>
            <person name="Lapidus A."/>
            <person name="Glavina del Rio T."/>
            <person name="Dalin E."/>
            <person name="Tice H."/>
            <person name="Pitluck S."/>
            <person name="Chain P."/>
            <person name="Malfatti S."/>
            <person name="Shin M."/>
            <person name="Vergez L."/>
            <person name="Lang D."/>
            <person name="Schmutz J."/>
            <person name="Larimer F."/>
            <person name="Land M."/>
            <person name="Hauser L."/>
            <person name="Kyrpides N."/>
            <person name="Mikhailova N."/>
            <person name="Taghavi S."/>
            <person name="Monchy S."/>
            <person name="Newman L."/>
            <person name="Vangronsveld J."/>
            <person name="van der Lelie D."/>
            <person name="Richardson P."/>
        </authorList>
    </citation>
    <scope>NUCLEOTIDE SEQUENCE [LARGE SCALE GENOMIC DNA]</scope>
    <source>
        <strain>R551-3</strain>
    </source>
</reference>
<proteinExistence type="inferred from homology"/>
<name>SYFA_STRM5</name>